<proteinExistence type="inferred from homology"/>
<organism>
    <name type="scientific">Salmonella paratyphi A (strain ATCC 9150 / SARB42)</name>
    <dbReference type="NCBI Taxonomy" id="295319"/>
    <lineage>
        <taxon>Bacteria</taxon>
        <taxon>Pseudomonadati</taxon>
        <taxon>Pseudomonadota</taxon>
        <taxon>Gammaproteobacteria</taxon>
        <taxon>Enterobacterales</taxon>
        <taxon>Enterobacteriaceae</taxon>
        <taxon>Salmonella</taxon>
    </lineage>
</organism>
<name>GSIB_SALPA</name>
<gene>
    <name evidence="1" type="primary">gsiB</name>
    <name type="ordered locus">SPA1906</name>
</gene>
<sequence>MTQFITHKWLAALGLASSIAAFPALAAKDVVVAVGSNFTTLDPYDANDTLSQAVAKSFYQGLFGLDKDMKVKNVLAEGYTVSDDGLTYTITLRQGVKFQDGADFDAAAVKANLDRASNPDNHLKRYNLYKNIAKTEVVDPVTVKITLKQPFSAFINILAHPATAMISPQALEKYGKDIGFHPVGTGPYQLETWNQTDFVKVKKFSGYWQQGLPKLDSITWRPVTDNNTRAAMLQTGEAQFAFPIPYEQAALLAKNKNLELVASPSIMQRYISMNVTQKPFDNPKVREALNYAINRQALVKVAFAGYATPATGVVPPSIAYAQSYQPWPYDPAKARELLKEAGYPDGFSTTLWSSHNHSTAQKVLQFTQQQLAQIGIKARITAMDAGQRAAEVEGKGQKESGVRMFYTGWSASTGEADWALSPLFASQNWPPTQFNTALYSNKQVDSDLAAALKTNDPQEKTRLYKEAQDIIWKESPWIPLVVEKLVSAHSKNLTGFWIMPDTGFSFDDADLK</sequence>
<comment type="function">
    <text evidence="1">Part of the ABC transporter complex GsiABCD involved in glutathione import. Binds glutathione.</text>
</comment>
<comment type="subunit">
    <text evidence="1">The complex is composed of two ATP-binding proteins (GsiA), two transmembrane proteins (GsiC and GsiD) and a solute-binding protein (GsiB).</text>
</comment>
<comment type="subcellular location">
    <subcellularLocation>
        <location evidence="1">Periplasm</location>
    </subcellularLocation>
</comment>
<comment type="similarity">
    <text evidence="3">Belongs to the bacterial solute-binding protein 5 family.</text>
</comment>
<dbReference type="EMBL" id="CP000026">
    <property type="protein sequence ID" value="AAV77817.1"/>
    <property type="molecule type" value="Genomic_DNA"/>
</dbReference>
<dbReference type="RefSeq" id="WP_000191431.1">
    <property type="nucleotide sequence ID" value="NC_006511.1"/>
</dbReference>
<dbReference type="SMR" id="Q5PGP4"/>
<dbReference type="KEGG" id="spt:SPA1906"/>
<dbReference type="HOGENOM" id="CLU_017028_7_3_6"/>
<dbReference type="Proteomes" id="UP000008185">
    <property type="component" value="Chromosome"/>
</dbReference>
<dbReference type="GO" id="GO:0043190">
    <property type="term" value="C:ATP-binding cassette (ABC) transporter complex"/>
    <property type="evidence" value="ECO:0007669"/>
    <property type="project" value="InterPro"/>
</dbReference>
<dbReference type="GO" id="GO:0030288">
    <property type="term" value="C:outer membrane-bounded periplasmic space"/>
    <property type="evidence" value="ECO:0007669"/>
    <property type="project" value="TreeGrafter"/>
</dbReference>
<dbReference type="GO" id="GO:1904680">
    <property type="term" value="F:peptide transmembrane transporter activity"/>
    <property type="evidence" value="ECO:0007669"/>
    <property type="project" value="TreeGrafter"/>
</dbReference>
<dbReference type="GO" id="GO:0042938">
    <property type="term" value="P:dipeptide transport"/>
    <property type="evidence" value="ECO:0007669"/>
    <property type="project" value="TreeGrafter"/>
</dbReference>
<dbReference type="CDD" id="cd08499">
    <property type="entry name" value="PBP2_Ylib_like"/>
    <property type="match status" value="1"/>
</dbReference>
<dbReference type="FunFam" id="3.10.105.10:FF:000003">
    <property type="entry name" value="Glutathione ABC transporter substrate-binding protein GsiB"/>
    <property type="match status" value="1"/>
</dbReference>
<dbReference type="FunFam" id="3.40.190.10:FF:000094">
    <property type="entry name" value="Glutathione ABC transporter substrate-binding protein GsiB"/>
    <property type="match status" value="1"/>
</dbReference>
<dbReference type="FunFam" id="3.90.76.10:FF:000003">
    <property type="entry name" value="Glutathione ABC transporter substrate-binding protein GsiB"/>
    <property type="match status" value="1"/>
</dbReference>
<dbReference type="Gene3D" id="3.90.76.10">
    <property type="entry name" value="Dipeptide-binding Protein, Domain 1"/>
    <property type="match status" value="1"/>
</dbReference>
<dbReference type="Gene3D" id="3.10.105.10">
    <property type="entry name" value="Dipeptide-binding Protein, Domain 3"/>
    <property type="match status" value="1"/>
</dbReference>
<dbReference type="Gene3D" id="3.40.190.10">
    <property type="entry name" value="Periplasmic binding protein-like II"/>
    <property type="match status" value="1"/>
</dbReference>
<dbReference type="InterPro" id="IPR030678">
    <property type="entry name" value="Peptide/Ni-bd"/>
</dbReference>
<dbReference type="InterPro" id="IPR039424">
    <property type="entry name" value="SBP_5"/>
</dbReference>
<dbReference type="InterPro" id="IPR000914">
    <property type="entry name" value="SBP_5_dom"/>
</dbReference>
<dbReference type="NCBIfam" id="NF011942">
    <property type="entry name" value="PRK15413.1"/>
    <property type="match status" value="1"/>
</dbReference>
<dbReference type="PANTHER" id="PTHR30290:SF32">
    <property type="entry name" value="GLUTATHIONE-BINDING PROTEIN GSIB"/>
    <property type="match status" value="1"/>
</dbReference>
<dbReference type="PANTHER" id="PTHR30290">
    <property type="entry name" value="PERIPLASMIC BINDING COMPONENT OF ABC TRANSPORTER"/>
    <property type="match status" value="1"/>
</dbReference>
<dbReference type="Pfam" id="PF00496">
    <property type="entry name" value="SBP_bac_5"/>
    <property type="match status" value="1"/>
</dbReference>
<dbReference type="PIRSF" id="PIRSF002741">
    <property type="entry name" value="MppA"/>
    <property type="match status" value="1"/>
</dbReference>
<dbReference type="SUPFAM" id="SSF53850">
    <property type="entry name" value="Periplasmic binding protein-like II"/>
    <property type="match status" value="1"/>
</dbReference>
<keyword id="KW-0574">Periplasm</keyword>
<keyword id="KW-0732">Signal</keyword>
<keyword id="KW-0813">Transport</keyword>
<feature type="signal peptide" evidence="2">
    <location>
        <begin position="1"/>
        <end position="26"/>
    </location>
</feature>
<feature type="chain" id="PRO_0000279979" description="Glutathione-binding protein GsiB">
    <location>
        <begin position="27"/>
        <end position="512"/>
    </location>
</feature>
<accession>Q5PGP4</accession>
<protein>
    <recommendedName>
        <fullName evidence="1">Glutathione-binding protein GsiB</fullName>
    </recommendedName>
</protein>
<evidence type="ECO:0000250" key="1">
    <source>
        <dbReference type="UniProtKB" id="P75797"/>
    </source>
</evidence>
<evidence type="ECO:0000255" key="2"/>
<evidence type="ECO:0000305" key="3"/>
<reference key="1">
    <citation type="journal article" date="2004" name="Nat. Genet.">
        <title>Comparison of genome degradation in Paratyphi A and Typhi, human-restricted serovars of Salmonella enterica that cause typhoid.</title>
        <authorList>
            <person name="McClelland M."/>
            <person name="Sanderson K.E."/>
            <person name="Clifton S.W."/>
            <person name="Latreille P."/>
            <person name="Porwollik S."/>
            <person name="Sabo A."/>
            <person name="Meyer R."/>
            <person name="Bieri T."/>
            <person name="Ozersky P."/>
            <person name="McLellan M."/>
            <person name="Harkins C.R."/>
            <person name="Wang C."/>
            <person name="Nguyen C."/>
            <person name="Berghoff A."/>
            <person name="Elliott G."/>
            <person name="Kohlberg S."/>
            <person name="Strong C."/>
            <person name="Du F."/>
            <person name="Carter J."/>
            <person name="Kremizki C."/>
            <person name="Layman D."/>
            <person name="Leonard S."/>
            <person name="Sun H."/>
            <person name="Fulton L."/>
            <person name="Nash W."/>
            <person name="Miner T."/>
            <person name="Minx P."/>
            <person name="Delehaunty K."/>
            <person name="Fronick C."/>
            <person name="Magrini V."/>
            <person name="Nhan M."/>
            <person name="Warren W."/>
            <person name="Florea L."/>
            <person name="Spieth J."/>
            <person name="Wilson R.K."/>
        </authorList>
    </citation>
    <scope>NUCLEOTIDE SEQUENCE [LARGE SCALE GENOMIC DNA]</scope>
    <source>
        <strain>ATCC 9150 / SARB42</strain>
    </source>
</reference>